<gene>
    <name evidence="2" type="primary">ddl</name>
    <name type="ordered locus">MS1664</name>
</gene>
<sequence length="307" mass="33760">MKPLKEQKIAVLLGGTSAEREVSLTSGDAVLTALRNQGYDAHPIDPKEYPVAQLKEQGFERAFNILHGRGGEDGVIQGVLEQIGLPYTGCGVMTSALTMDKMRTKMLWKGFGLPIADMEIVTRDTVDELNPLEVVERLGLPLMVKPSREGSSVGLTKVNAVEELKNAVDLALTHDDTVLIEEWLSGIEMTVPVLDDQVLPAVQIIPEGEFYDYDAKYISDNTRYICPAPMSEESLQELQKLVKRAYDVVGCRGWSRIDVMTDANGNFRLVEVNTTPGMTSHSLFPKSAATVGYSFEQLVVKILELSA</sequence>
<evidence type="ECO:0000250" key="1"/>
<evidence type="ECO:0000255" key="2">
    <source>
        <dbReference type="HAMAP-Rule" id="MF_00047"/>
    </source>
</evidence>
<accession>Q65RY9</accession>
<keyword id="KW-0067">ATP-binding</keyword>
<keyword id="KW-0133">Cell shape</keyword>
<keyword id="KW-0961">Cell wall biogenesis/degradation</keyword>
<keyword id="KW-0963">Cytoplasm</keyword>
<keyword id="KW-0436">Ligase</keyword>
<keyword id="KW-0460">Magnesium</keyword>
<keyword id="KW-0464">Manganese</keyword>
<keyword id="KW-0479">Metal-binding</keyword>
<keyword id="KW-0547">Nucleotide-binding</keyword>
<keyword id="KW-0573">Peptidoglycan synthesis</keyword>
<proteinExistence type="inferred from homology"/>
<organism>
    <name type="scientific">Mannheimia succiniciproducens (strain KCTC 0769BP / MBEL55E)</name>
    <dbReference type="NCBI Taxonomy" id="221988"/>
    <lineage>
        <taxon>Bacteria</taxon>
        <taxon>Pseudomonadati</taxon>
        <taxon>Pseudomonadota</taxon>
        <taxon>Gammaproteobacteria</taxon>
        <taxon>Pasteurellales</taxon>
        <taxon>Pasteurellaceae</taxon>
        <taxon>Basfia</taxon>
    </lineage>
</organism>
<reference key="1">
    <citation type="journal article" date="2004" name="Nat. Biotechnol.">
        <title>The genome sequence of the capnophilic rumen bacterium Mannheimia succiniciproducens.</title>
        <authorList>
            <person name="Hong S.H."/>
            <person name="Kim J.S."/>
            <person name="Lee S.Y."/>
            <person name="In Y.H."/>
            <person name="Choi S.S."/>
            <person name="Rih J.-K."/>
            <person name="Kim C.H."/>
            <person name="Jeong H."/>
            <person name="Hur C.G."/>
            <person name="Kim J.J."/>
        </authorList>
    </citation>
    <scope>NUCLEOTIDE SEQUENCE [LARGE SCALE GENOMIC DNA]</scope>
    <source>
        <strain>KCTC 0769BP / MBEL55E</strain>
    </source>
</reference>
<name>DDL_MANSM</name>
<feature type="chain" id="PRO_0000177840" description="D-alanine--D-alanine ligase">
    <location>
        <begin position="1"/>
        <end position="307"/>
    </location>
</feature>
<feature type="domain" description="ATP-grasp" evidence="2">
    <location>
        <begin position="105"/>
        <end position="304"/>
    </location>
</feature>
<feature type="binding site" evidence="2">
    <location>
        <begin position="135"/>
        <end position="190"/>
    </location>
    <ligand>
        <name>ATP</name>
        <dbReference type="ChEBI" id="CHEBI:30616"/>
    </ligand>
</feature>
<feature type="binding site" evidence="2">
    <location>
        <position position="258"/>
    </location>
    <ligand>
        <name>Mg(2+)</name>
        <dbReference type="ChEBI" id="CHEBI:18420"/>
        <label>1</label>
    </ligand>
</feature>
<feature type="binding site" evidence="2">
    <location>
        <position position="271"/>
    </location>
    <ligand>
        <name>Mg(2+)</name>
        <dbReference type="ChEBI" id="CHEBI:18420"/>
        <label>1</label>
    </ligand>
</feature>
<feature type="binding site" evidence="2">
    <location>
        <position position="271"/>
    </location>
    <ligand>
        <name>Mg(2+)</name>
        <dbReference type="ChEBI" id="CHEBI:18420"/>
        <label>2</label>
    </ligand>
</feature>
<feature type="binding site" evidence="2">
    <location>
        <position position="273"/>
    </location>
    <ligand>
        <name>Mg(2+)</name>
        <dbReference type="ChEBI" id="CHEBI:18420"/>
        <label>2</label>
    </ligand>
</feature>
<comment type="function">
    <text evidence="2">Cell wall formation.</text>
</comment>
<comment type="catalytic activity">
    <reaction evidence="2">
        <text>2 D-alanine + ATP = D-alanyl-D-alanine + ADP + phosphate + H(+)</text>
        <dbReference type="Rhea" id="RHEA:11224"/>
        <dbReference type="ChEBI" id="CHEBI:15378"/>
        <dbReference type="ChEBI" id="CHEBI:30616"/>
        <dbReference type="ChEBI" id="CHEBI:43474"/>
        <dbReference type="ChEBI" id="CHEBI:57416"/>
        <dbReference type="ChEBI" id="CHEBI:57822"/>
        <dbReference type="ChEBI" id="CHEBI:456216"/>
        <dbReference type="EC" id="6.3.2.4"/>
    </reaction>
</comment>
<comment type="cofactor">
    <cofactor evidence="1">
        <name>Mg(2+)</name>
        <dbReference type="ChEBI" id="CHEBI:18420"/>
    </cofactor>
    <cofactor evidence="1">
        <name>Mn(2+)</name>
        <dbReference type="ChEBI" id="CHEBI:29035"/>
    </cofactor>
    <text evidence="1">Binds 2 magnesium or manganese ions per subunit.</text>
</comment>
<comment type="pathway">
    <text evidence="2">Cell wall biogenesis; peptidoglycan biosynthesis.</text>
</comment>
<comment type="subcellular location">
    <subcellularLocation>
        <location evidence="2">Cytoplasm</location>
    </subcellularLocation>
</comment>
<comment type="similarity">
    <text evidence="2">Belongs to the D-alanine--D-alanine ligase family.</text>
</comment>
<protein>
    <recommendedName>
        <fullName evidence="2">D-alanine--D-alanine ligase</fullName>
        <ecNumber evidence="2">6.3.2.4</ecNumber>
    </recommendedName>
    <alternativeName>
        <fullName evidence="2">D-Ala-D-Ala ligase</fullName>
    </alternativeName>
    <alternativeName>
        <fullName evidence="2">D-alanylalanine synthetase</fullName>
    </alternativeName>
</protein>
<dbReference type="EC" id="6.3.2.4" evidence="2"/>
<dbReference type="EMBL" id="AE016827">
    <property type="protein sequence ID" value="AAU38271.1"/>
    <property type="molecule type" value="Genomic_DNA"/>
</dbReference>
<dbReference type="RefSeq" id="WP_011200832.1">
    <property type="nucleotide sequence ID" value="NC_006300.1"/>
</dbReference>
<dbReference type="SMR" id="Q65RY9"/>
<dbReference type="STRING" id="221988.MS1664"/>
<dbReference type="KEGG" id="msu:MS1664"/>
<dbReference type="eggNOG" id="COG1181">
    <property type="taxonomic scope" value="Bacteria"/>
</dbReference>
<dbReference type="HOGENOM" id="CLU_039268_1_2_6"/>
<dbReference type="OrthoDB" id="9813261at2"/>
<dbReference type="UniPathway" id="UPA00219"/>
<dbReference type="Proteomes" id="UP000000607">
    <property type="component" value="Chromosome"/>
</dbReference>
<dbReference type="GO" id="GO:0005829">
    <property type="term" value="C:cytosol"/>
    <property type="evidence" value="ECO:0007669"/>
    <property type="project" value="TreeGrafter"/>
</dbReference>
<dbReference type="GO" id="GO:0005524">
    <property type="term" value="F:ATP binding"/>
    <property type="evidence" value="ECO:0007669"/>
    <property type="project" value="UniProtKB-KW"/>
</dbReference>
<dbReference type="GO" id="GO:0008716">
    <property type="term" value="F:D-alanine-D-alanine ligase activity"/>
    <property type="evidence" value="ECO:0007669"/>
    <property type="project" value="UniProtKB-UniRule"/>
</dbReference>
<dbReference type="GO" id="GO:0046872">
    <property type="term" value="F:metal ion binding"/>
    <property type="evidence" value="ECO:0007669"/>
    <property type="project" value="UniProtKB-KW"/>
</dbReference>
<dbReference type="GO" id="GO:0071555">
    <property type="term" value="P:cell wall organization"/>
    <property type="evidence" value="ECO:0007669"/>
    <property type="project" value="UniProtKB-KW"/>
</dbReference>
<dbReference type="GO" id="GO:0009252">
    <property type="term" value="P:peptidoglycan biosynthetic process"/>
    <property type="evidence" value="ECO:0007669"/>
    <property type="project" value="UniProtKB-UniRule"/>
</dbReference>
<dbReference type="GO" id="GO:0008360">
    <property type="term" value="P:regulation of cell shape"/>
    <property type="evidence" value="ECO:0007669"/>
    <property type="project" value="UniProtKB-KW"/>
</dbReference>
<dbReference type="FunFam" id="3.30.1490.20:FF:000007">
    <property type="entry name" value="D-alanine--D-alanine ligase"/>
    <property type="match status" value="1"/>
</dbReference>
<dbReference type="FunFam" id="3.30.470.20:FF:000008">
    <property type="entry name" value="D-alanine--D-alanine ligase"/>
    <property type="match status" value="1"/>
</dbReference>
<dbReference type="FunFam" id="3.40.50.20:FF:000013">
    <property type="entry name" value="D-alanine--D-alanine ligase"/>
    <property type="match status" value="1"/>
</dbReference>
<dbReference type="Gene3D" id="3.40.50.20">
    <property type="match status" value="1"/>
</dbReference>
<dbReference type="Gene3D" id="3.30.1490.20">
    <property type="entry name" value="ATP-grasp fold, A domain"/>
    <property type="match status" value="1"/>
</dbReference>
<dbReference type="Gene3D" id="3.30.470.20">
    <property type="entry name" value="ATP-grasp fold, B domain"/>
    <property type="match status" value="1"/>
</dbReference>
<dbReference type="HAMAP" id="MF_00047">
    <property type="entry name" value="Dala_Dala_lig"/>
    <property type="match status" value="1"/>
</dbReference>
<dbReference type="InterPro" id="IPR011761">
    <property type="entry name" value="ATP-grasp"/>
</dbReference>
<dbReference type="InterPro" id="IPR013815">
    <property type="entry name" value="ATP_grasp_subdomain_1"/>
</dbReference>
<dbReference type="InterPro" id="IPR000291">
    <property type="entry name" value="D-Ala_lig_Van_CS"/>
</dbReference>
<dbReference type="InterPro" id="IPR005905">
    <property type="entry name" value="D_ala_D_ala"/>
</dbReference>
<dbReference type="InterPro" id="IPR011095">
    <property type="entry name" value="Dala_Dala_lig_C"/>
</dbReference>
<dbReference type="InterPro" id="IPR011127">
    <property type="entry name" value="Dala_Dala_lig_N"/>
</dbReference>
<dbReference type="InterPro" id="IPR016185">
    <property type="entry name" value="PreATP-grasp_dom_sf"/>
</dbReference>
<dbReference type="NCBIfam" id="TIGR01205">
    <property type="entry name" value="D_ala_D_alaTIGR"/>
    <property type="match status" value="1"/>
</dbReference>
<dbReference type="NCBIfam" id="NF002378">
    <property type="entry name" value="PRK01372.1"/>
    <property type="match status" value="1"/>
</dbReference>
<dbReference type="PANTHER" id="PTHR23132">
    <property type="entry name" value="D-ALANINE--D-ALANINE LIGASE"/>
    <property type="match status" value="1"/>
</dbReference>
<dbReference type="PANTHER" id="PTHR23132:SF23">
    <property type="entry name" value="D-ALANINE--D-ALANINE LIGASE B"/>
    <property type="match status" value="1"/>
</dbReference>
<dbReference type="Pfam" id="PF07478">
    <property type="entry name" value="Dala_Dala_lig_C"/>
    <property type="match status" value="1"/>
</dbReference>
<dbReference type="Pfam" id="PF01820">
    <property type="entry name" value="Dala_Dala_lig_N"/>
    <property type="match status" value="2"/>
</dbReference>
<dbReference type="PIRSF" id="PIRSF039102">
    <property type="entry name" value="Ddl/VanB"/>
    <property type="match status" value="1"/>
</dbReference>
<dbReference type="SUPFAM" id="SSF56059">
    <property type="entry name" value="Glutathione synthetase ATP-binding domain-like"/>
    <property type="match status" value="1"/>
</dbReference>
<dbReference type="SUPFAM" id="SSF52440">
    <property type="entry name" value="PreATP-grasp domain"/>
    <property type="match status" value="1"/>
</dbReference>
<dbReference type="PROSITE" id="PS50975">
    <property type="entry name" value="ATP_GRASP"/>
    <property type="match status" value="1"/>
</dbReference>
<dbReference type="PROSITE" id="PS00843">
    <property type="entry name" value="DALA_DALA_LIGASE_1"/>
    <property type="match status" value="1"/>
</dbReference>
<dbReference type="PROSITE" id="PS00844">
    <property type="entry name" value="DALA_DALA_LIGASE_2"/>
    <property type="match status" value="1"/>
</dbReference>